<reference key="1">
    <citation type="journal article" date="2007" name="PLoS Genet.">
        <title>Patterns and implications of gene gain and loss in the evolution of Prochlorococcus.</title>
        <authorList>
            <person name="Kettler G.C."/>
            <person name="Martiny A.C."/>
            <person name="Huang K."/>
            <person name="Zucker J."/>
            <person name="Coleman M.L."/>
            <person name="Rodrigue S."/>
            <person name="Chen F."/>
            <person name="Lapidus A."/>
            <person name="Ferriera S."/>
            <person name="Johnson J."/>
            <person name="Steglich C."/>
            <person name="Church G.M."/>
            <person name="Richardson P."/>
            <person name="Chisholm S.W."/>
        </authorList>
    </citation>
    <scope>NUCLEOTIDE SEQUENCE [LARGE SCALE GENOMIC DNA]</scope>
    <source>
        <strain>MIT 9515</strain>
    </source>
</reference>
<feature type="chain" id="PRO_1000063114" description="Imidazole glycerol phosphate synthase subunit HisF">
    <location>
        <begin position="1"/>
        <end position="257"/>
    </location>
</feature>
<feature type="active site" evidence="1">
    <location>
        <position position="11"/>
    </location>
</feature>
<feature type="active site" evidence="1">
    <location>
        <position position="130"/>
    </location>
</feature>
<evidence type="ECO:0000255" key="1">
    <source>
        <dbReference type="HAMAP-Rule" id="MF_01013"/>
    </source>
</evidence>
<keyword id="KW-0028">Amino-acid biosynthesis</keyword>
<keyword id="KW-0963">Cytoplasm</keyword>
<keyword id="KW-0368">Histidine biosynthesis</keyword>
<keyword id="KW-0456">Lyase</keyword>
<dbReference type="EC" id="4.3.2.10" evidence="1"/>
<dbReference type="EMBL" id="CP000552">
    <property type="protein sequence ID" value="ABM71701.1"/>
    <property type="molecule type" value="Genomic_DNA"/>
</dbReference>
<dbReference type="RefSeq" id="WP_011819809.1">
    <property type="nucleotide sequence ID" value="NC_008817.1"/>
</dbReference>
<dbReference type="SMR" id="A2BV90"/>
<dbReference type="STRING" id="167542.P9515_04921"/>
<dbReference type="GeneID" id="60202067"/>
<dbReference type="KEGG" id="pmc:P9515_04921"/>
<dbReference type="eggNOG" id="COG0107">
    <property type="taxonomic scope" value="Bacteria"/>
</dbReference>
<dbReference type="HOGENOM" id="CLU_048577_4_0_3"/>
<dbReference type="OrthoDB" id="9781903at2"/>
<dbReference type="UniPathway" id="UPA00031">
    <property type="reaction ID" value="UER00010"/>
</dbReference>
<dbReference type="Proteomes" id="UP000001589">
    <property type="component" value="Chromosome"/>
</dbReference>
<dbReference type="GO" id="GO:0005737">
    <property type="term" value="C:cytoplasm"/>
    <property type="evidence" value="ECO:0007669"/>
    <property type="project" value="UniProtKB-SubCell"/>
</dbReference>
<dbReference type="GO" id="GO:0000107">
    <property type="term" value="F:imidazoleglycerol-phosphate synthase activity"/>
    <property type="evidence" value="ECO:0007669"/>
    <property type="project" value="UniProtKB-UniRule"/>
</dbReference>
<dbReference type="GO" id="GO:0016829">
    <property type="term" value="F:lyase activity"/>
    <property type="evidence" value="ECO:0007669"/>
    <property type="project" value="UniProtKB-KW"/>
</dbReference>
<dbReference type="GO" id="GO:0000105">
    <property type="term" value="P:L-histidine biosynthetic process"/>
    <property type="evidence" value="ECO:0007669"/>
    <property type="project" value="UniProtKB-UniRule"/>
</dbReference>
<dbReference type="CDD" id="cd04731">
    <property type="entry name" value="HisF"/>
    <property type="match status" value="1"/>
</dbReference>
<dbReference type="FunFam" id="3.20.20.70:FF:000006">
    <property type="entry name" value="Imidazole glycerol phosphate synthase subunit HisF"/>
    <property type="match status" value="1"/>
</dbReference>
<dbReference type="Gene3D" id="3.20.20.70">
    <property type="entry name" value="Aldolase class I"/>
    <property type="match status" value="1"/>
</dbReference>
<dbReference type="HAMAP" id="MF_01013">
    <property type="entry name" value="HisF"/>
    <property type="match status" value="1"/>
</dbReference>
<dbReference type="InterPro" id="IPR013785">
    <property type="entry name" value="Aldolase_TIM"/>
</dbReference>
<dbReference type="InterPro" id="IPR006062">
    <property type="entry name" value="His_biosynth"/>
</dbReference>
<dbReference type="InterPro" id="IPR004651">
    <property type="entry name" value="HisF"/>
</dbReference>
<dbReference type="InterPro" id="IPR050064">
    <property type="entry name" value="IGPS_HisA/HisF"/>
</dbReference>
<dbReference type="InterPro" id="IPR011060">
    <property type="entry name" value="RibuloseP-bd_barrel"/>
</dbReference>
<dbReference type="NCBIfam" id="TIGR00735">
    <property type="entry name" value="hisF"/>
    <property type="match status" value="1"/>
</dbReference>
<dbReference type="PANTHER" id="PTHR21235:SF2">
    <property type="entry name" value="IMIDAZOLE GLYCEROL PHOSPHATE SYNTHASE HISHF"/>
    <property type="match status" value="1"/>
</dbReference>
<dbReference type="PANTHER" id="PTHR21235">
    <property type="entry name" value="IMIDAZOLE GLYCEROL PHOSPHATE SYNTHASE SUBUNIT HISF/H IGP SYNTHASE SUBUNIT HISF/H"/>
    <property type="match status" value="1"/>
</dbReference>
<dbReference type="Pfam" id="PF00977">
    <property type="entry name" value="His_biosynth"/>
    <property type="match status" value="1"/>
</dbReference>
<dbReference type="SUPFAM" id="SSF51366">
    <property type="entry name" value="Ribulose-phoshate binding barrel"/>
    <property type="match status" value="1"/>
</dbReference>
<name>HIS6_PROM5</name>
<proteinExistence type="inferred from homology"/>
<accession>A2BV90</accession>
<sequence length="257" mass="27619">MVALRLIPCLDVANGRVVKGVNFVNLRDSGDPVELACRYSEAGADELVFLDIRASVENRKTLVDLVSRTAKSVKIPFTVGGGINSIVTINDLLRAGADKVSLNSSAVKNPKIISQSSKKFGTQCIVIAIDARKKHNVSNEWEVYVKGGRENTGLDVVNWAKKVEELGAGEILLTSMDGDGTQNGYDLLLTKTVAKAVNIPVIASGGAGSLEDIFDVFTEGEASAALLASLLHDKKLTIEEIKSFLINKKLIIRPNEK</sequence>
<comment type="function">
    <text evidence="1">IGPS catalyzes the conversion of PRFAR and glutamine to IGP, AICAR and glutamate. The HisF subunit catalyzes the cyclization activity that produces IGP and AICAR from PRFAR using the ammonia provided by the HisH subunit.</text>
</comment>
<comment type="catalytic activity">
    <reaction evidence="1">
        <text>5-[(5-phospho-1-deoxy-D-ribulos-1-ylimino)methylamino]-1-(5-phospho-beta-D-ribosyl)imidazole-4-carboxamide + L-glutamine = D-erythro-1-(imidazol-4-yl)glycerol 3-phosphate + 5-amino-1-(5-phospho-beta-D-ribosyl)imidazole-4-carboxamide + L-glutamate + H(+)</text>
        <dbReference type="Rhea" id="RHEA:24793"/>
        <dbReference type="ChEBI" id="CHEBI:15378"/>
        <dbReference type="ChEBI" id="CHEBI:29985"/>
        <dbReference type="ChEBI" id="CHEBI:58278"/>
        <dbReference type="ChEBI" id="CHEBI:58359"/>
        <dbReference type="ChEBI" id="CHEBI:58475"/>
        <dbReference type="ChEBI" id="CHEBI:58525"/>
        <dbReference type="EC" id="4.3.2.10"/>
    </reaction>
</comment>
<comment type="pathway">
    <text evidence="1">Amino-acid biosynthesis; L-histidine biosynthesis; L-histidine from 5-phospho-alpha-D-ribose 1-diphosphate: step 5/9.</text>
</comment>
<comment type="subunit">
    <text evidence="1">Heterodimer of HisH and HisF.</text>
</comment>
<comment type="subcellular location">
    <subcellularLocation>
        <location evidence="1">Cytoplasm</location>
    </subcellularLocation>
</comment>
<comment type="similarity">
    <text evidence="1">Belongs to the HisA/HisF family.</text>
</comment>
<gene>
    <name evidence="1" type="primary">hisF</name>
    <name type="ordered locus">P9515_04921</name>
</gene>
<protein>
    <recommendedName>
        <fullName evidence="1">Imidazole glycerol phosphate synthase subunit HisF</fullName>
        <ecNumber evidence="1">4.3.2.10</ecNumber>
    </recommendedName>
    <alternativeName>
        <fullName evidence="1">IGP synthase cyclase subunit</fullName>
    </alternativeName>
    <alternativeName>
        <fullName evidence="1">IGP synthase subunit HisF</fullName>
    </alternativeName>
    <alternativeName>
        <fullName evidence="1">ImGP synthase subunit HisF</fullName>
        <shortName evidence="1">IGPS subunit HisF</shortName>
    </alternativeName>
</protein>
<organism>
    <name type="scientific">Prochlorococcus marinus (strain MIT 9515)</name>
    <dbReference type="NCBI Taxonomy" id="167542"/>
    <lineage>
        <taxon>Bacteria</taxon>
        <taxon>Bacillati</taxon>
        <taxon>Cyanobacteriota</taxon>
        <taxon>Cyanophyceae</taxon>
        <taxon>Synechococcales</taxon>
        <taxon>Prochlorococcaceae</taxon>
        <taxon>Prochlorococcus</taxon>
    </lineage>
</organism>